<protein>
    <recommendedName>
        <fullName>Omega-amidase NIT2</fullName>
        <ecNumber evidence="1">3.5.1.3</ecNumber>
    </recommendedName>
    <alternativeName>
        <fullName>Nitrilase homolog 2</fullName>
    </alternativeName>
</protein>
<organism>
    <name type="scientific">Xenopus tropicalis</name>
    <name type="common">Western clawed frog</name>
    <name type="synonym">Silurana tropicalis</name>
    <dbReference type="NCBI Taxonomy" id="8364"/>
    <lineage>
        <taxon>Eukaryota</taxon>
        <taxon>Metazoa</taxon>
        <taxon>Chordata</taxon>
        <taxon>Craniata</taxon>
        <taxon>Vertebrata</taxon>
        <taxon>Euteleostomi</taxon>
        <taxon>Amphibia</taxon>
        <taxon>Batrachia</taxon>
        <taxon>Anura</taxon>
        <taxon>Pipoidea</taxon>
        <taxon>Pipidae</taxon>
        <taxon>Xenopodinae</taxon>
        <taxon>Xenopus</taxon>
        <taxon>Silurana</taxon>
    </lineage>
</organism>
<keyword id="KW-0963">Cytoplasm</keyword>
<keyword id="KW-0378">Hydrolase</keyword>
<keyword id="KW-1185">Reference proteome</keyword>
<sequence length="276" mass="30805">MAKFRLSLVQFLVSPVKSENLNRACKLIKEAAQKGAQIVALPECFNSPYGTKYFPEYAEKIPGESTERLSQVAKECGIYLIGGSIPEEDSGKLYNTCAVFGPDGTLLVKHRKIHLFDIDVPGKIRFQESETLSPGDSFSVFETPYCKVGVGICYDIRFAELAQLYSKKGCQLLVYPGAFNMTTGPAHWELLQRARALDNQVYVATASPARDEKASYVAWGHSTIVSPWGEVIAKAGSEETVISADIDLEYLAEIREQIPIRRQRRHDLYSVEEKKN</sequence>
<comment type="function">
    <text evidence="1">Has omega-amidase activity. The role of omega-amidase is to remove potentially toxic intermediates by converting 2-oxoglutaramate and 2-oxosuccinamate to biologically useful 2-oxoglutarate and oxaloacetate, respectively.</text>
</comment>
<comment type="catalytic activity">
    <reaction evidence="1">
        <text>2-oxoglutaramate + H2O = 2-oxoglutarate + NH4(+)</text>
        <dbReference type="Rhea" id="RHEA:32963"/>
        <dbReference type="ChEBI" id="CHEBI:15377"/>
        <dbReference type="ChEBI" id="CHEBI:16769"/>
        <dbReference type="ChEBI" id="CHEBI:16810"/>
        <dbReference type="ChEBI" id="CHEBI:28938"/>
        <dbReference type="EC" id="3.5.1.3"/>
    </reaction>
    <physiologicalReaction direction="left-to-right" evidence="1">
        <dbReference type="Rhea" id="RHEA:32964"/>
    </physiologicalReaction>
</comment>
<comment type="catalytic activity">
    <reaction evidence="1">
        <text>2-oxosuccinamate + H2O = oxaloacetate + NH4(+)</text>
        <dbReference type="Rhea" id="RHEA:59412"/>
        <dbReference type="ChEBI" id="CHEBI:15377"/>
        <dbReference type="ChEBI" id="CHEBI:16452"/>
        <dbReference type="ChEBI" id="CHEBI:28938"/>
        <dbReference type="ChEBI" id="CHEBI:57735"/>
        <dbReference type="EC" id="3.5.1.3"/>
    </reaction>
    <physiologicalReaction direction="left-to-right" evidence="1">
        <dbReference type="Rhea" id="RHEA:59413"/>
    </physiologicalReaction>
</comment>
<comment type="subunit">
    <text evidence="1">Homodimer.</text>
</comment>
<comment type="subcellular location">
    <subcellularLocation>
        <location evidence="1">Cytoplasm</location>
    </subcellularLocation>
</comment>
<comment type="similarity">
    <text evidence="3">Belongs to the carbon-nitrogen hydrolase superfamily. NIT1/NIT2 family.</text>
</comment>
<name>NIT2_XENTR</name>
<gene>
    <name type="primary">nit2</name>
    <name type="ORF">TNeu073c04.1</name>
</gene>
<feature type="chain" id="PRO_0000320260" description="Omega-amidase NIT2">
    <location>
        <begin position="1"/>
        <end position="276"/>
    </location>
</feature>
<feature type="domain" description="CN hydrolase" evidence="2">
    <location>
        <begin position="4"/>
        <end position="248"/>
    </location>
</feature>
<feature type="active site" description="Proton acceptor" evidence="2">
    <location>
        <position position="43"/>
    </location>
</feature>
<feature type="active site" description="Proton donor" evidence="2">
    <location>
        <position position="112"/>
    </location>
</feature>
<feature type="active site" description="Nucleophile" evidence="2">
    <location>
        <position position="153"/>
    </location>
</feature>
<dbReference type="EC" id="3.5.1.3" evidence="1"/>
<dbReference type="EMBL" id="CR760444">
    <property type="protein sequence ID" value="CAJ82781.1"/>
    <property type="molecule type" value="mRNA"/>
</dbReference>
<dbReference type="EMBL" id="BC091101">
    <property type="protein sequence ID" value="AAH91101.1"/>
    <property type="molecule type" value="mRNA"/>
</dbReference>
<dbReference type="RefSeq" id="NP_001016633.1">
    <property type="nucleotide sequence ID" value="NM_001016633.1"/>
</dbReference>
<dbReference type="SMR" id="Q28IE5"/>
<dbReference type="FunCoup" id="Q28IE5">
    <property type="interactions" value="940"/>
</dbReference>
<dbReference type="STRING" id="8364.ENSXETP00000032940"/>
<dbReference type="PaxDb" id="8364-ENSXETP00000025924"/>
<dbReference type="GeneID" id="549387"/>
<dbReference type="KEGG" id="xtr:549387"/>
<dbReference type="AGR" id="Xenbase:XB-GENE-946902"/>
<dbReference type="CTD" id="56954"/>
<dbReference type="eggNOG" id="KOG0806">
    <property type="taxonomic scope" value="Eukaryota"/>
</dbReference>
<dbReference type="HOGENOM" id="CLU_030130_1_0_1"/>
<dbReference type="InParanoid" id="Q28IE5"/>
<dbReference type="OrthoDB" id="10250282at2759"/>
<dbReference type="Reactome" id="R-XTR-6798695">
    <property type="pathway name" value="Neutrophil degranulation"/>
</dbReference>
<dbReference type="Proteomes" id="UP000008143">
    <property type="component" value="Chromosome 2"/>
</dbReference>
<dbReference type="GO" id="GO:0005737">
    <property type="term" value="C:cytoplasm"/>
    <property type="evidence" value="ECO:0007669"/>
    <property type="project" value="UniProtKB-SubCell"/>
</dbReference>
<dbReference type="GO" id="GO:0106008">
    <property type="term" value="F:2-oxoglutaramate amidase activity"/>
    <property type="evidence" value="ECO:0007669"/>
    <property type="project" value="RHEA"/>
</dbReference>
<dbReference type="GO" id="GO:0050152">
    <property type="term" value="F:omega-amidase activity"/>
    <property type="evidence" value="ECO:0007669"/>
    <property type="project" value="UniProtKB-EC"/>
</dbReference>
<dbReference type="CDD" id="cd07572">
    <property type="entry name" value="nit"/>
    <property type="match status" value="1"/>
</dbReference>
<dbReference type="FunFam" id="3.60.110.10:FF:000002">
    <property type="entry name" value="Nitrilase family member 2"/>
    <property type="match status" value="1"/>
</dbReference>
<dbReference type="Gene3D" id="3.60.110.10">
    <property type="entry name" value="Carbon-nitrogen hydrolase"/>
    <property type="match status" value="1"/>
</dbReference>
<dbReference type="InterPro" id="IPR003010">
    <property type="entry name" value="C-N_Hydrolase"/>
</dbReference>
<dbReference type="InterPro" id="IPR036526">
    <property type="entry name" value="C-N_Hydrolase_sf"/>
</dbReference>
<dbReference type="InterPro" id="IPR045254">
    <property type="entry name" value="Nit1/2_C-N_Hydrolase"/>
</dbReference>
<dbReference type="PANTHER" id="PTHR23088">
    <property type="entry name" value="NITRILASE-RELATED"/>
    <property type="match status" value="1"/>
</dbReference>
<dbReference type="PANTHER" id="PTHR23088:SF30">
    <property type="entry name" value="OMEGA-AMIDASE NIT2"/>
    <property type="match status" value="1"/>
</dbReference>
<dbReference type="Pfam" id="PF00795">
    <property type="entry name" value="CN_hydrolase"/>
    <property type="match status" value="1"/>
</dbReference>
<dbReference type="SUPFAM" id="SSF56317">
    <property type="entry name" value="Carbon-nitrogen hydrolase"/>
    <property type="match status" value="1"/>
</dbReference>
<dbReference type="PROSITE" id="PS50263">
    <property type="entry name" value="CN_HYDROLASE"/>
    <property type="match status" value="1"/>
</dbReference>
<evidence type="ECO:0000250" key="1">
    <source>
        <dbReference type="UniProtKB" id="Q9NQR4"/>
    </source>
</evidence>
<evidence type="ECO:0000255" key="2">
    <source>
        <dbReference type="PROSITE-ProRule" id="PRU00054"/>
    </source>
</evidence>
<evidence type="ECO:0000305" key="3"/>
<proteinExistence type="evidence at transcript level"/>
<reference key="1">
    <citation type="submission" date="2006-10" db="EMBL/GenBank/DDBJ databases">
        <authorList>
            <consortium name="Sanger Xenopus tropicalis EST/cDNA project"/>
        </authorList>
    </citation>
    <scope>NUCLEOTIDE SEQUENCE [LARGE SCALE MRNA]</scope>
    <source>
        <tissue>Neurula</tissue>
    </source>
</reference>
<reference key="2">
    <citation type="submission" date="2005-03" db="EMBL/GenBank/DDBJ databases">
        <authorList>
            <consortium name="NIH - Xenopus Gene Collection (XGC) project"/>
        </authorList>
    </citation>
    <scope>NUCLEOTIDE SEQUENCE [LARGE SCALE MRNA] OF 2-276</scope>
    <source>
        <strain>F6</strain>
    </source>
</reference>
<accession>Q28IE5</accession>
<accession>Q5BKE8</accession>